<gene>
    <name type="primary">PAK2</name>
</gene>
<evidence type="ECO:0000250" key="1">
    <source>
        <dbReference type="UniProtKB" id="Q13153"/>
    </source>
</evidence>
<evidence type="ECO:0000250" key="2">
    <source>
        <dbReference type="UniProtKB" id="Q13177"/>
    </source>
</evidence>
<evidence type="ECO:0000250" key="3">
    <source>
        <dbReference type="UniProtKB" id="Q8CIN4"/>
    </source>
</evidence>
<evidence type="ECO:0000255" key="4">
    <source>
        <dbReference type="PROSITE-ProRule" id="PRU00057"/>
    </source>
</evidence>
<evidence type="ECO:0000255" key="5">
    <source>
        <dbReference type="PROSITE-ProRule" id="PRU00159"/>
    </source>
</evidence>
<evidence type="ECO:0000255" key="6">
    <source>
        <dbReference type="PROSITE-ProRule" id="PRU10027"/>
    </source>
</evidence>
<evidence type="ECO:0000256" key="7">
    <source>
        <dbReference type="SAM" id="MobiDB-lite"/>
    </source>
</evidence>
<organism>
    <name type="scientific">Oryctolagus cuniculus</name>
    <name type="common">Rabbit</name>
    <dbReference type="NCBI Taxonomy" id="9986"/>
    <lineage>
        <taxon>Eukaryota</taxon>
        <taxon>Metazoa</taxon>
        <taxon>Chordata</taxon>
        <taxon>Craniata</taxon>
        <taxon>Vertebrata</taxon>
        <taxon>Euteleostomi</taxon>
        <taxon>Mammalia</taxon>
        <taxon>Eutheria</taxon>
        <taxon>Euarchontoglires</taxon>
        <taxon>Glires</taxon>
        <taxon>Lagomorpha</taxon>
        <taxon>Leporidae</taxon>
        <taxon>Oryctolagus</taxon>
    </lineage>
</organism>
<sequence>MSDNGELEDKPPAPPVRMSSTIFSTGGKDPLSANHSLKPLPSVPEEKKPRNKIISIFSGTEKGSKKKEKERPEISPPSDFEHTIHVGFDAVTGEFTGMPEQWARLLQTSNITKLEQKKNPQAVLDVLKFYDSNTVKQKYLSFTPPEKDGFPSGAPALNTKVSETSAVVTEEDDDDEEAAPPVIAPRPDHTKSIYTRSVIDPIPAPVGDSHVDSGAKSSDKQKKKTKMTDEEIMEKLRTIVSIGDPKKKYTRYEKIGQGASGTVFTATDVALGQEVAIKQINLQKQPKKELIINEILVMKELKNPNIVNFLDSYLVGDELFVVMEYLAGGSLTDVVTETCMDEAQIAAVCRECLQALEFLHANQVIHRDIKSDNVLLGMEGSVKLTDFGFCAQITPEQSKRSTMVGTPYWMAPEVVTRKAYGPKVDIWSLGIMAIEMVEGEPPYLNENPLRALYLIATNGTPELQNPEKLSPIFRDFLNRCLEMDVEKRGSAKELLQHPFLKLAKPLSSLTPLIMAAKEAMKSNR</sequence>
<reference key="1">
    <citation type="journal article" date="1996" name="J. Biol. Chem.">
        <title>Molecular cloning and sequencing of the cytostatic G protein-activated protein kinase PAK I.</title>
        <authorList>
            <person name="Jakobi R."/>
            <person name="Chen C."/>
            <person name="Tuazon P.T."/>
            <person name="Traugh J.A."/>
        </authorList>
    </citation>
    <scope>NUCLEOTIDE SEQUENCE [MRNA]</scope>
</reference>
<feature type="initiator methionine" description="Removed" evidence="2">
    <location>
        <position position="1"/>
    </location>
</feature>
<feature type="chain" id="PRO_0000086467" description="Serine/threonine-protein kinase PAK 2">
    <location>
        <begin position="2"/>
        <end position="524"/>
    </location>
</feature>
<feature type="chain" id="PRO_0000304926" description="PAK-2p27" evidence="2">
    <location>
        <begin position="2"/>
        <end position="212"/>
    </location>
</feature>
<feature type="chain" id="PRO_0000304927" description="PAK-2p34" evidence="2">
    <location>
        <begin position="213"/>
        <end position="524"/>
    </location>
</feature>
<feature type="domain" description="CRIB" evidence="4">
    <location>
        <begin position="74"/>
        <end position="87"/>
    </location>
</feature>
<feature type="domain" description="Protein kinase" evidence="5">
    <location>
        <begin position="249"/>
        <end position="500"/>
    </location>
</feature>
<feature type="region of interest" description="Disordered" evidence="7">
    <location>
        <begin position="1"/>
        <end position="81"/>
    </location>
</feature>
<feature type="region of interest" description="Autoregulatory region" evidence="1">
    <location>
        <begin position="69"/>
        <end position="137"/>
    </location>
</feature>
<feature type="region of interest" description="GTPase-binding" evidence="1">
    <location>
        <begin position="69"/>
        <end position="112"/>
    </location>
</feature>
<feature type="region of interest" description="Linker">
    <location>
        <begin position="88"/>
        <end position="248"/>
    </location>
</feature>
<feature type="region of interest" description="Disordered" evidence="7">
    <location>
        <begin position="169"/>
        <end position="188"/>
    </location>
</feature>
<feature type="region of interest" description="Disordered" evidence="7">
    <location>
        <begin position="204"/>
        <end position="228"/>
    </location>
</feature>
<feature type="short sequence motif" description="Nuclear localization signal" evidence="2">
    <location>
        <begin position="245"/>
        <end position="251"/>
    </location>
</feature>
<feature type="compositionally biased region" description="Basic and acidic residues" evidence="7">
    <location>
        <begin position="67"/>
        <end position="81"/>
    </location>
</feature>
<feature type="compositionally biased region" description="Acidic residues" evidence="7">
    <location>
        <begin position="169"/>
        <end position="178"/>
    </location>
</feature>
<feature type="compositionally biased region" description="Basic and acidic residues" evidence="7">
    <location>
        <begin position="209"/>
        <end position="228"/>
    </location>
</feature>
<feature type="active site" description="Proton acceptor" evidence="5 6">
    <location>
        <position position="368"/>
    </location>
</feature>
<feature type="binding site" evidence="5">
    <location>
        <begin position="255"/>
        <end position="263"/>
    </location>
    <ligand>
        <name>ATP</name>
        <dbReference type="ChEBI" id="CHEBI:30616"/>
    </ligand>
</feature>
<feature type="binding site" evidence="5">
    <location>
        <position position="278"/>
    </location>
    <ligand>
        <name>ATP</name>
        <dbReference type="ChEBI" id="CHEBI:30616"/>
    </ligand>
</feature>
<feature type="site" description="Cleavage; by caspase-3 or caspase-3-like proteases" evidence="2">
    <location>
        <begin position="212"/>
        <end position="213"/>
    </location>
</feature>
<feature type="modified residue" description="N-acetylserine" evidence="2">
    <location>
        <position position="2"/>
    </location>
</feature>
<feature type="modified residue" description="Phosphoserine" evidence="2">
    <location>
        <position position="2"/>
    </location>
</feature>
<feature type="modified residue" description="Phosphoserine" evidence="2">
    <location>
        <position position="20"/>
    </location>
</feature>
<feature type="modified residue" description="Phosphoserine" evidence="2">
    <location>
        <position position="55"/>
    </location>
</feature>
<feature type="modified residue" description="Phosphoserine" evidence="2">
    <location>
        <position position="58"/>
    </location>
</feature>
<feature type="modified residue" description="Phosphothreonine" evidence="2">
    <location>
        <position position="60"/>
    </location>
</feature>
<feature type="modified residue" description="N6-acetyllysine" evidence="3">
    <location>
        <position position="62"/>
    </location>
</feature>
<feature type="modified residue" description="Phosphoserine" evidence="2">
    <location>
        <position position="64"/>
    </location>
</feature>
<feature type="modified residue" description="N6-acetyllysine" evidence="2">
    <location>
        <position position="128"/>
    </location>
</feature>
<feature type="modified residue" description="Phosphothreonine" evidence="2">
    <location>
        <position position="134"/>
    </location>
</feature>
<feature type="modified residue" description="Phosphotyrosine" evidence="2">
    <location>
        <position position="139"/>
    </location>
</feature>
<feature type="modified residue" description="Phosphoserine" evidence="2">
    <location>
        <position position="141"/>
    </location>
</feature>
<feature type="modified residue" description="Phosphothreonine" evidence="2">
    <location>
        <position position="143"/>
    </location>
</feature>
<feature type="modified residue" description="Phosphoserine" evidence="3">
    <location>
        <position position="152"/>
    </location>
</feature>
<feature type="modified residue" description="Phosphothreonine" evidence="3">
    <location>
        <position position="159"/>
    </location>
</feature>
<feature type="modified residue" description="Phosphothreonine" evidence="2">
    <location>
        <position position="169"/>
    </location>
</feature>
<feature type="modified residue" description="Phosphoserine" evidence="2">
    <location>
        <position position="197"/>
    </location>
</feature>
<feature type="modified residue" description="Phosphothreonine; by autocatalysis" evidence="2">
    <location>
        <position position="402"/>
    </location>
</feature>
<accession>Q29502</accession>
<proteinExistence type="evidence at protein level"/>
<comment type="function">
    <text evidence="2">Serine/threonine protein kinase that plays a role in a variety of different signaling pathways including cytoskeleton regulation, cell motility, cell cycle progression, apoptosis or proliferation. Acts as a downstream effector of the small GTPases CDC42 and RAC1. Activation by the binding of active CDC42 and RAC1 results in a conformational change and a subsequent autophosphorylation on several serine and/or threonine residues. Full-length PAK2 stimulates cell survival and cell growth. Phosphorylates MAPK4 and MAPK6 and activates the downstream target MAPKAPK5, a regulator of F-actin polymerization and cell migration. Phosphorylates JUN and plays an important role in EGF-induced cell proliferation. Phosphorylates many other substrates including histone H4 to promote assembly of H3.3 and H4 into nucleosomes, BAD, ribosomal protein S6, or MBP. Phosphorylates CASP7, thereby preventing its activity. Additionally, associates with ARHGEF7 and GIT1 to perform kinase-independent functions such as spindle orientation control during mitosis. On the other hand, apoptotic stimuli such as DNA damage lead to caspase-mediated cleavage of PAK2, generating PAK-2p34, an active p34 fragment that translocates to the nucleus and promotes cellular apoptosis involving the JNK signaling pathway. Caspase-activated PAK2 phosphorylates MKNK1 and reduces cellular translation (By similarity).</text>
</comment>
<comment type="catalytic activity">
    <reaction evidence="2">
        <text>L-seryl-[protein] + ATP = O-phospho-L-seryl-[protein] + ADP + H(+)</text>
        <dbReference type="Rhea" id="RHEA:17989"/>
        <dbReference type="Rhea" id="RHEA-COMP:9863"/>
        <dbReference type="Rhea" id="RHEA-COMP:11604"/>
        <dbReference type="ChEBI" id="CHEBI:15378"/>
        <dbReference type="ChEBI" id="CHEBI:29999"/>
        <dbReference type="ChEBI" id="CHEBI:30616"/>
        <dbReference type="ChEBI" id="CHEBI:83421"/>
        <dbReference type="ChEBI" id="CHEBI:456216"/>
        <dbReference type="EC" id="2.7.11.1"/>
    </reaction>
    <physiologicalReaction direction="left-to-right" evidence="2">
        <dbReference type="Rhea" id="RHEA:17990"/>
    </physiologicalReaction>
</comment>
<comment type="catalytic activity">
    <reaction evidence="2">
        <text>L-threonyl-[protein] + ATP = O-phospho-L-threonyl-[protein] + ADP + H(+)</text>
        <dbReference type="Rhea" id="RHEA:46608"/>
        <dbReference type="Rhea" id="RHEA-COMP:11060"/>
        <dbReference type="Rhea" id="RHEA-COMP:11605"/>
        <dbReference type="ChEBI" id="CHEBI:15378"/>
        <dbReference type="ChEBI" id="CHEBI:30013"/>
        <dbReference type="ChEBI" id="CHEBI:30616"/>
        <dbReference type="ChEBI" id="CHEBI:61977"/>
        <dbReference type="ChEBI" id="CHEBI:456216"/>
        <dbReference type="EC" id="2.7.11.1"/>
    </reaction>
    <physiologicalReaction direction="left-to-right" evidence="2">
        <dbReference type="Rhea" id="RHEA:46609"/>
    </physiologicalReaction>
</comment>
<comment type="activity regulation">
    <text evidence="2">Activated by binding small G proteins. Binding of GTP-bound CDC42 or RAC1 to the autoregulatory region releases monomers from the autoinhibited dimer, enables phosphorylation of Thr-402 and allows the kinase domain to adopt an active structure. Following caspase cleavage, autophosphorylated PAK-2p34 is constitutively active (By similarity).</text>
</comment>
<comment type="subunit">
    <text evidence="2">Interacts tightly with GTP-bound but not GDP-bound CDC42/p21 and RAC1. Interacts with SH3MD4. Interacts with SCRIB. Interacts with ARHGEF7 and GIT1. PAK-2p34 interacts with ARHGAP10. Interacts with RAC1 (By similarity).</text>
</comment>
<comment type="interaction">
    <interactant intactId="EBI-4406512">
        <id>PRO_0000304927</id>
    </interactant>
    <interactant intactId="EBI-4396535">
        <id>Q6Y5D8</id>
        <label>Arhgap10</label>
    </interactant>
    <organismsDiffer>true</organismsDiffer>
    <experiments>3</experiments>
</comment>
<comment type="interaction">
    <interactant intactId="EBI-4406512">
        <id>PRO_0000304927</id>
    </interactant>
    <interactant intactId="EBI-4396677">
        <id>Q6Y5D8-1</id>
        <label>Arhgap10</label>
    </interactant>
    <organismsDiffer>true</organismsDiffer>
    <experiments>4</experiments>
</comment>
<comment type="subcellular location">
    <molecule>Serine/threonine-protein kinase PAK 2</molecule>
    <subcellularLocation>
        <location evidence="2">Cytoplasm</location>
    </subcellularLocation>
    <subcellularLocation>
        <location evidence="2">Nucleus</location>
    </subcellularLocation>
    <text evidence="2">MYO18A mediates the cellular distribution of the PAK2-ARHGEF7-GIT1 complex to the inner surface of the cell membrane.</text>
</comment>
<comment type="subcellular location">
    <molecule>PAK-2p34</molecule>
    <subcellularLocation>
        <location evidence="2">Nucleus</location>
    </subcellularLocation>
    <subcellularLocation>
        <location evidence="2">Cytoplasm</location>
        <location evidence="2">Perinuclear region</location>
    </subcellularLocation>
    <subcellularLocation>
        <location evidence="2">Membrane</location>
        <topology evidence="2">Lipid-anchor</topology>
    </subcellularLocation>
    <text evidence="2">Interaction with ARHGAP10 probably changes PAK-2p34 location to cytoplasmic perinuclear region. Myristoylation changes PAK-2p34 location to the membrane.</text>
</comment>
<comment type="PTM">
    <text evidence="2">Full-length PAK2 is autophosphorylated when activated by CDC42/p21. Following cleavage, both peptides, PAK-2p27 and PAK-2p34, become highly autophosphorylated. Autophosphorylation of PAK-2p27 can occur in the absence of any effectors and is dependent on phosphorylation of Thr-402, because PAK-2p27 is acting as an exogenous substrate (By similarity).</text>
</comment>
<comment type="PTM">
    <text evidence="2">During apoptosis proteolytically cleaved by caspase-3 or caspase-3-like proteases to yield active PAK-2p34.</text>
</comment>
<comment type="PTM">
    <text evidence="2">Ubiquitinated, leading to its proteasomal degradation.</text>
</comment>
<protein>
    <recommendedName>
        <fullName>Serine/threonine-protein kinase PAK 2</fullName>
        <ecNumber>2.7.11.1</ecNumber>
    </recommendedName>
    <alternativeName>
        <fullName>Gamma-PAK</fullName>
    </alternativeName>
    <alternativeName>
        <fullName>p21-activated kinase 2</fullName>
        <shortName>PAK-2</shortName>
    </alternativeName>
    <alternativeName>
        <fullName>p21-activated protein kinase I</fullName>
        <shortName>PAKI</shortName>
    </alternativeName>
    <component>
        <recommendedName>
            <fullName>PAK-2p27</fullName>
        </recommendedName>
    </component>
    <component>
        <recommendedName>
            <fullName>PAK-2p34</fullName>
        </recommendedName>
    </component>
</protein>
<dbReference type="EC" id="2.7.11.1"/>
<dbReference type="EMBL" id="U46915">
    <property type="protein sequence ID" value="AAC48537.1"/>
    <property type="molecule type" value="mRNA"/>
</dbReference>
<dbReference type="RefSeq" id="NP_001076225.1">
    <property type="nucleotide sequence ID" value="NM_001082756.1"/>
</dbReference>
<dbReference type="RefSeq" id="XP_017202139.1">
    <property type="nucleotide sequence ID" value="XM_017346650.3"/>
</dbReference>
<dbReference type="RefSeq" id="XP_069927767.1">
    <property type="nucleotide sequence ID" value="XM_070071666.1"/>
</dbReference>
<dbReference type="SMR" id="Q29502"/>
<dbReference type="FunCoup" id="Q29502">
    <property type="interactions" value="2676"/>
</dbReference>
<dbReference type="IntAct" id="Q29502">
    <property type="interactions" value="1"/>
</dbReference>
<dbReference type="STRING" id="9986.ENSOCUP00000007111"/>
<dbReference type="iPTMnet" id="Q29502"/>
<dbReference type="PaxDb" id="9986-ENSOCUP00000007111"/>
<dbReference type="Ensembl" id="ENSOCUT00000008227.2">
    <property type="protein sequence ID" value="ENSOCUP00000007111.2"/>
    <property type="gene ID" value="ENSOCUG00000008224.2"/>
</dbReference>
<dbReference type="GeneID" id="100009535"/>
<dbReference type="KEGG" id="ocu:100009535"/>
<dbReference type="CTD" id="5062"/>
<dbReference type="eggNOG" id="KOG0578">
    <property type="taxonomic scope" value="Eukaryota"/>
</dbReference>
<dbReference type="GeneTree" id="ENSGT00950000182988"/>
<dbReference type="HOGENOM" id="CLU_000288_26_6_1"/>
<dbReference type="InParanoid" id="Q29502"/>
<dbReference type="OMA" id="DYCNANC"/>
<dbReference type="OrthoDB" id="2914378at2759"/>
<dbReference type="TreeFam" id="TF105351"/>
<dbReference type="BRENDA" id="2.7.11.1">
    <property type="organism ID" value="1749"/>
</dbReference>
<dbReference type="Proteomes" id="UP000001811">
    <property type="component" value="Chromosome 14"/>
</dbReference>
<dbReference type="Bgee" id="ENSOCUG00000008224">
    <property type="expression patterns" value="Expressed in aorta and 16 other cell types or tissues"/>
</dbReference>
<dbReference type="GO" id="GO:0005911">
    <property type="term" value="C:cell-cell junction"/>
    <property type="evidence" value="ECO:0007669"/>
    <property type="project" value="Ensembl"/>
</dbReference>
<dbReference type="GO" id="GO:0005829">
    <property type="term" value="C:cytosol"/>
    <property type="evidence" value="ECO:0000304"/>
    <property type="project" value="Reactome"/>
</dbReference>
<dbReference type="GO" id="GO:0005925">
    <property type="term" value="C:focal adhesion"/>
    <property type="evidence" value="ECO:0007669"/>
    <property type="project" value="Ensembl"/>
</dbReference>
<dbReference type="GO" id="GO:0098978">
    <property type="term" value="C:glutamatergic synapse"/>
    <property type="evidence" value="ECO:0007669"/>
    <property type="project" value="Ensembl"/>
</dbReference>
<dbReference type="GO" id="GO:0016020">
    <property type="term" value="C:membrane"/>
    <property type="evidence" value="ECO:0007669"/>
    <property type="project" value="UniProtKB-SubCell"/>
</dbReference>
<dbReference type="GO" id="GO:0016607">
    <property type="term" value="C:nuclear speck"/>
    <property type="evidence" value="ECO:0007669"/>
    <property type="project" value="Ensembl"/>
</dbReference>
<dbReference type="GO" id="GO:0005654">
    <property type="term" value="C:nucleoplasm"/>
    <property type="evidence" value="ECO:0000304"/>
    <property type="project" value="Reactome"/>
</dbReference>
<dbReference type="GO" id="GO:0048471">
    <property type="term" value="C:perinuclear region of cytoplasm"/>
    <property type="evidence" value="ECO:0007669"/>
    <property type="project" value="UniProtKB-SubCell"/>
</dbReference>
<dbReference type="GO" id="GO:0014069">
    <property type="term" value="C:postsynaptic density"/>
    <property type="evidence" value="ECO:0007669"/>
    <property type="project" value="Ensembl"/>
</dbReference>
<dbReference type="GO" id="GO:0005524">
    <property type="term" value="F:ATP binding"/>
    <property type="evidence" value="ECO:0007669"/>
    <property type="project" value="UniProtKB-KW"/>
</dbReference>
<dbReference type="GO" id="GO:0042802">
    <property type="term" value="F:identical protein binding"/>
    <property type="evidence" value="ECO:0007669"/>
    <property type="project" value="Ensembl"/>
</dbReference>
<dbReference type="GO" id="GO:0019901">
    <property type="term" value="F:protein kinase binding"/>
    <property type="evidence" value="ECO:0007669"/>
    <property type="project" value="Ensembl"/>
</dbReference>
<dbReference type="GO" id="GO:0106310">
    <property type="term" value="F:protein serine kinase activity"/>
    <property type="evidence" value="ECO:0007669"/>
    <property type="project" value="RHEA"/>
</dbReference>
<dbReference type="GO" id="GO:0004674">
    <property type="term" value="F:protein serine/threonine kinase activity"/>
    <property type="evidence" value="ECO:0000250"/>
    <property type="project" value="UniProtKB"/>
</dbReference>
<dbReference type="GO" id="GO:0030296">
    <property type="term" value="F:protein tyrosine kinase activator activity"/>
    <property type="evidence" value="ECO:0007669"/>
    <property type="project" value="Ensembl"/>
</dbReference>
<dbReference type="GO" id="GO:0031267">
    <property type="term" value="F:small GTPase binding"/>
    <property type="evidence" value="ECO:0007669"/>
    <property type="project" value="Ensembl"/>
</dbReference>
<dbReference type="GO" id="GO:0034333">
    <property type="term" value="P:adherens junction assembly"/>
    <property type="evidence" value="ECO:0007669"/>
    <property type="project" value="Ensembl"/>
</dbReference>
<dbReference type="GO" id="GO:0070830">
    <property type="term" value="P:bicellular tight junction assembly"/>
    <property type="evidence" value="ECO:0007669"/>
    <property type="project" value="Ensembl"/>
</dbReference>
<dbReference type="GO" id="GO:0060996">
    <property type="term" value="P:dendritic spine development"/>
    <property type="evidence" value="ECO:0007669"/>
    <property type="project" value="Ensembl"/>
</dbReference>
<dbReference type="GO" id="GO:0097194">
    <property type="term" value="P:execution phase of apoptosis"/>
    <property type="evidence" value="ECO:0000315"/>
    <property type="project" value="UniProtKB"/>
</dbReference>
<dbReference type="GO" id="GO:0035556">
    <property type="term" value="P:intracellular signal transduction"/>
    <property type="evidence" value="ECO:0007669"/>
    <property type="project" value="Ensembl"/>
</dbReference>
<dbReference type="GO" id="GO:0043066">
    <property type="term" value="P:negative regulation of apoptotic process"/>
    <property type="evidence" value="ECO:0007669"/>
    <property type="project" value="Ensembl"/>
</dbReference>
<dbReference type="GO" id="GO:0051497">
    <property type="term" value="P:negative regulation of stress fiber assembly"/>
    <property type="evidence" value="ECO:0007669"/>
    <property type="project" value="Ensembl"/>
</dbReference>
<dbReference type="GO" id="GO:0043065">
    <property type="term" value="P:positive regulation of apoptotic process"/>
    <property type="evidence" value="ECO:0000315"/>
    <property type="project" value="UniProtKB"/>
</dbReference>
<dbReference type="GO" id="GO:2001238">
    <property type="term" value="P:positive regulation of extrinsic apoptotic signaling pathway"/>
    <property type="evidence" value="ECO:0007669"/>
    <property type="project" value="Ensembl"/>
</dbReference>
<dbReference type="GO" id="GO:0150105">
    <property type="term" value="P:protein localization to cell-cell junction"/>
    <property type="evidence" value="ECO:0007669"/>
    <property type="project" value="Ensembl"/>
</dbReference>
<dbReference type="CDD" id="cd01093">
    <property type="entry name" value="CRIB_PAK_like"/>
    <property type="match status" value="1"/>
</dbReference>
<dbReference type="CDD" id="cd06655">
    <property type="entry name" value="STKc_PAK2"/>
    <property type="match status" value="1"/>
</dbReference>
<dbReference type="FunFam" id="1.10.510.10:FF:000011">
    <property type="entry name" value="Non-specific serine/threonine protein kinase"/>
    <property type="match status" value="1"/>
</dbReference>
<dbReference type="FunFam" id="3.30.200.20:FF:000069">
    <property type="entry name" value="Non-specific serine/threonine protein kinase"/>
    <property type="match status" value="1"/>
</dbReference>
<dbReference type="FunFam" id="3.90.810.10:FF:000001">
    <property type="entry name" value="Non-specific serine/threonine protein kinase"/>
    <property type="match status" value="1"/>
</dbReference>
<dbReference type="Gene3D" id="3.90.810.10">
    <property type="entry name" value="CRIB domain"/>
    <property type="match status" value="1"/>
</dbReference>
<dbReference type="Gene3D" id="3.30.200.20">
    <property type="entry name" value="Phosphorylase Kinase, domain 1"/>
    <property type="match status" value="1"/>
</dbReference>
<dbReference type="Gene3D" id="1.10.510.10">
    <property type="entry name" value="Transferase(Phosphotransferase) domain 1"/>
    <property type="match status" value="1"/>
</dbReference>
<dbReference type="InterPro" id="IPR000095">
    <property type="entry name" value="CRIB_dom"/>
</dbReference>
<dbReference type="InterPro" id="IPR036936">
    <property type="entry name" value="CRIB_dom_sf"/>
</dbReference>
<dbReference type="InterPro" id="IPR011009">
    <property type="entry name" value="Kinase-like_dom_sf"/>
</dbReference>
<dbReference type="InterPro" id="IPR051931">
    <property type="entry name" value="PAK3-like"/>
</dbReference>
<dbReference type="InterPro" id="IPR033923">
    <property type="entry name" value="PAK_BD"/>
</dbReference>
<dbReference type="InterPro" id="IPR000719">
    <property type="entry name" value="Prot_kinase_dom"/>
</dbReference>
<dbReference type="InterPro" id="IPR017441">
    <property type="entry name" value="Protein_kinase_ATP_BS"/>
</dbReference>
<dbReference type="InterPro" id="IPR008271">
    <property type="entry name" value="Ser/Thr_kinase_AS"/>
</dbReference>
<dbReference type="InterPro" id="IPR035064">
    <property type="entry name" value="STK_PAK2"/>
</dbReference>
<dbReference type="PANTHER" id="PTHR45832:SF21">
    <property type="entry name" value="NON-SPECIFIC SERINE_THREONINE PROTEIN KINASE"/>
    <property type="match status" value="1"/>
</dbReference>
<dbReference type="PANTHER" id="PTHR45832">
    <property type="entry name" value="SERINE/THREONINE-PROTEIN KINASE SAMKA-RELATED-RELATED"/>
    <property type="match status" value="1"/>
</dbReference>
<dbReference type="Pfam" id="PF00786">
    <property type="entry name" value="PBD"/>
    <property type="match status" value="1"/>
</dbReference>
<dbReference type="Pfam" id="PF00069">
    <property type="entry name" value="Pkinase"/>
    <property type="match status" value="1"/>
</dbReference>
<dbReference type="SMART" id="SM00285">
    <property type="entry name" value="PBD"/>
    <property type="match status" value="1"/>
</dbReference>
<dbReference type="SMART" id="SM00220">
    <property type="entry name" value="S_TKc"/>
    <property type="match status" value="1"/>
</dbReference>
<dbReference type="SUPFAM" id="SSF56112">
    <property type="entry name" value="Protein kinase-like (PK-like)"/>
    <property type="match status" value="1"/>
</dbReference>
<dbReference type="PROSITE" id="PS50108">
    <property type="entry name" value="CRIB"/>
    <property type="match status" value="1"/>
</dbReference>
<dbReference type="PROSITE" id="PS00107">
    <property type="entry name" value="PROTEIN_KINASE_ATP"/>
    <property type="match status" value="1"/>
</dbReference>
<dbReference type="PROSITE" id="PS50011">
    <property type="entry name" value="PROTEIN_KINASE_DOM"/>
    <property type="match status" value="1"/>
</dbReference>
<dbReference type="PROSITE" id="PS00108">
    <property type="entry name" value="PROTEIN_KINASE_ST"/>
    <property type="match status" value="1"/>
</dbReference>
<keyword id="KW-0007">Acetylation</keyword>
<keyword id="KW-0021">Allosteric enzyme</keyword>
<keyword id="KW-0067">ATP-binding</keyword>
<keyword id="KW-0963">Cytoplasm</keyword>
<keyword id="KW-0418">Kinase</keyword>
<keyword id="KW-0449">Lipoprotein</keyword>
<keyword id="KW-0472">Membrane</keyword>
<keyword id="KW-0547">Nucleotide-binding</keyword>
<keyword id="KW-0539">Nucleus</keyword>
<keyword id="KW-0597">Phosphoprotein</keyword>
<keyword id="KW-1185">Reference proteome</keyword>
<keyword id="KW-0723">Serine/threonine-protein kinase</keyword>
<keyword id="KW-0808">Transferase</keyword>
<keyword id="KW-0832">Ubl conjugation</keyword>
<name>PAK2_RABIT</name>